<accession>O04151</accession>
<sequence length="425" mass="48527">MAKLNPKFISLILFALVVIVSAEVIFEEKFEDGWEKRWVKSDWKKDDNTAGEWKHTAGNWSGDANDKGIQTSEDYRFYAISAEFPEFSNKDKTLVFQFSVKHEQKLDCGGGYMKLLSDDVDQTKFGGDTPYSIMFGPDICGYSTKKVHAILTYNGTNHLIKKEVPCETDQLTHVYTFVLRPDATYSILIDNVEKQTGSLYSDWDLLPAKKIKDPSAKKPEDWDDKEYIPDPEDTKPAGYDDIPKEIPDTDAKKPEDWDDEEDGEWTAPTIPNPEYNGEWKPKKIKNPAYKGKWKAPMIDNPEFKDDPELYVFPKLKYVGVELWQVKSGSLFDNVLVSDDPEYAKKLAEETWGKHKDAEKAAFDEAEKKREEEESKDAPAESDAEEEAEDDDNEGDDSDNESKSEETKEAEETKEAEETDAAHDEL</sequence>
<protein>
    <recommendedName>
        <fullName>Calreticulin-1</fullName>
    </recommendedName>
</protein>
<feature type="signal peptide" evidence="4">
    <location>
        <begin position="1"/>
        <end position="22"/>
    </location>
</feature>
<feature type="chain" id="PRO_0000004184" description="Calreticulin-1">
    <location>
        <begin position="23"/>
        <end position="425"/>
    </location>
</feature>
<feature type="repeat" description="1-1">
    <location>
        <begin position="194"/>
        <end position="205"/>
    </location>
</feature>
<feature type="repeat" description="1-2">
    <location>
        <begin position="213"/>
        <end position="224"/>
    </location>
</feature>
<feature type="repeat" description="1-3">
    <location>
        <begin position="230"/>
        <end position="241"/>
    </location>
</feature>
<feature type="repeat" description="1-4">
    <location>
        <begin position="248"/>
        <end position="259"/>
    </location>
</feature>
<feature type="repeat" description="2-1">
    <location>
        <begin position="263"/>
        <end position="273"/>
    </location>
</feature>
<feature type="repeat" description="2-2">
    <location>
        <begin position="277"/>
        <end position="287"/>
    </location>
</feature>
<feature type="repeat" description="2-3">
    <location>
        <begin position="291"/>
        <end position="301"/>
    </location>
</feature>
<feature type="region of interest" description="4 X approximate repeats">
    <location>
        <begin position="194"/>
        <end position="259"/>
    </location>
</feature>
<feature type="region of interest" description="Disordered" evidence="6">
    <location>
        <begin position="213"/>
        <end position="281"/>
    </location>
</feature>
<feature type="region of interest" description="3 X approximate repeats">
    <location>
        <begin position="263"/>
        <end position="301"/>
    </location>
</feature>
<feature type="region of interest" description="Disordered" evidence="6">
    <location>
        <begin position="348"/>
        <end position="425"/>
    </location>
</feature>
<feature type="short sequence motif" description="Prevents secretion from ER" evidence="5">
    <location>
        <begin position="422"/>
        <end position="425"/>
    </location>
</feature>
<feature type="compositionally biased region" description="Basic and acidic residues" evidence="6">
    <location>
        <begin position="213"/>
        <end position="235"/>
    </location>
</feature>
<feature type="compositionally biased region" description="Basic and acidic residues" evidence="6">
    <location>
        <begin position="241"/>
        <end position="255"/>
    </location>
</feature>
<feature type="compositionally biased region" description="Basic and acidic residues" evidence="6">
    <location>
        <begin position="348"/>
        <end position="378"/>
    </location>
</feature>
<feature type="compositionally biased region" description="Acidic residues" evidence="6">
    <location>
        <begin position="379"/>
        <end position="398"/>
    </location>
</feature>
<feature type="compositionally biased region" description="Basic and acidic residues" evidence="6">
    <location>
        <begin position="399"/>
        <end position="412"/>
    </location>
</feature>
<feature type="binding site" evidence="2">
    <location>
        <position position="112"/>
    </location>
    <ligand>
        <name>an alpha-D-glucoside</name>
        <dbReference type="ChEBI" id="CHEBI:22390"/>
    </ligand>
</feature>
<feature type="binding site" evidence="2">
    <location>
        <position position="114"/>
    </location>
    <ligand>
        <name>an alpha-D-glucoside</name>
        <dbReference type="ChEBI" id="CHEBI:22390"/>
    </ligand>
</feature>
<feature type="binding site" evidence="2">
    <location>
        <position position="131"/>
    </location>
    <ligand>
        <name>an alpha-D-glucoside</name>
        <dbReference type="ChEBI" id="CHEBI:22390"/>
    </ligand>
</feature>
<feature type="binding site" evidence="2">
    <location>
        <position position="138"/>
    </location>
    <ligand>
        <name>an alpha-D-glucoside</name>
        <dbReference type="ChEBI" id="CHEBI:22390"/>
    </ligand>
</feature>
<feature type="binding site" evidence="2">
    <location>
        <position position="321"/>
    </location>
    <ligand>
        <name>an alpha-D-glucoside</name>
        <dbReference type="ChEBI" id="CHEBI:22390"/>
    </ligand>
</feature>
<feature type="modified residue" description="Phosphoserine" evidence="9 10">
    <location>
        <position position="381"/>
    </location>
</feature>
<feature type="modified residue" description="Phosphoserine" evidence="3">
    <location>
        <position position="397"/>
    </location>
</feature>
<feature type="glycosylation site" description="N-linked (GlcNAc...) asparagine" evidence="4">
    <location>
        <position position="59"/>
    </location>
</feature>
<feature type="glycosylation site" description="N-linked (GlcNAc...) asparagine" evidence="4">
    <location>
        <position position="154"/>
    </location>
</feature>
<feature type="glycosylation site" description="N-linked (GlcNAc...) asparagine" evidence="4">
    <location>
        <position position="399"/>
    </location>
</feature>
<feature type="disulfide bond" evidence="1">
    <location>
        <begin position="108"/>
        <end position="140"/>
    </location>
</feature>
<gene>
    <name type="primary">CRT1</name>
    <name type="ordered locus">At1g56340</name>
    <name type="ORF">F13N6.20</name>
    <name type="ORF">F14G9.5</name>
</gene>
<comment type="function">
    <text evidence="1">Molecular calcium-binding chaperone promoting folding, oligomeric assembly and quality control in the ER via the calreticulin/calnexin cycle. This lectin may interact transiently with almost all of the monoglucosylated glycoproteins that are synthesized in the ER (By similarity).</text>
</comment>
<comment type="subcellular location">
    <subcellularLocation>
        <location evidence="5">Endoplasmic reticulum lumen</location>
    </subcellularLocation>
</comment>
<comment type="alternative products">
    <event type="alternative splicing"/>
    <isoform>
        <id>O04151-1</id>
        <name>1</name>
        <sequence type="displayed"/>
    </isoform>
    <text>A number of isoforms are produced. According to EST sequences.</text>
</comment>
<comment type="induction">
    <text evidence="7">Induced by cadmium.</text>
</comment>
<comment type="domain">
    <text evidence="1">Can be divided into a N-terminal globular domain, a proline-rich P-domain forming an elongated arm-like structure and a C-terminal acidic domain. The P-domain binds one molecule of calcium with high affinity, whereas the acidic C-domain binds multiple calcium ions with low affinity (By similarity).</text>
</comment>
<comment type="domain">
    <text evidence="1">The interaction with glycans occurs through a binding site in the globular lectin domain.</text>
</comment>
<comment type="domain">
    <text evidence="1">The zinc binding sites are localized to the N-domain.</text>
</comment>
<comment type="similarity">
    <text evidence="8">Belongs to the calreticulin family.</text>
</comment>
<evidence type="ECO:0000250" key="1"/>
<evidence type="ECO:0000250" key="2">
    <source>
        <dbReference type="UniProtKB" id="P14211"/>
    </source>
</evidence>
<evidence type="ECO:0000250" key="3">
    <source>
        <dbReference type="UniProtKB" id="P29402"/>
    </source>
</evidence>
<evidence type="ECO:0000255" key="4"/>
<evidence type="ECO:0000255" key="5">
    <source>
        <dbReference type="PROSITE-ProRule" id="PRU10138"/>
    </source>
</evidence>
<evidence type="ECO:0000256" key="6">
    <source>
        <dbReference type="SAM" id="MobiDB-lite"/>
    </source>
</evidence>
<evidence type="ECO:0000269" key="7">
    <source>
    </source>
</evidence>
<evidence type="ECO:0000305" key="8"/>
<evidence type="ECO:0007744" key="9">
    <source>
    </source>
</evidence>
<evidence type="ECO:0007744" key="10">
    <source>
    </source>
</evidence>
<name>CALR1_ARATH</name>
<proteinExistence type="evidence at protein level"/>
<keyword id="KW-0025">Alternative splicing</keyword>
<keyword id="KW-0106">Calcium</keyword>
<keyword id="KW-0143">Chaperone</keyword>
<keyword id="KW-1015">Disulfide bond</keyword>
<keyword id="KW-0256">Endoplasmic reticulum</keyword>
<keyword id="KW-0325">Glycoprotein</keyword>
<keyword id="KW-0430">Lectin</keyword>
<keyword id="KW-0479">Metal-binding</keyword>
<keyword id="KW-0597">Phosphoprotein</keyword>
<keyword id="KW-1185">Reference proteome</keyword>
<keyword id="KW-0677">Repeat</keyword>
<keyword id="KW-0732">Signal</keyword>
<keyword id="KW-0862">Zinc</keyword>
<dbReference type="EMBL" id="U66343">
    <property type="protein sequence ID" value="AAC49695.1"/>
    <property type="molecule type" value="mRNA"/>
</dbReference>
<dbReference type="EMBL" id="AC058785">
    <property type="protein sequence ID" value="AAG51504.1"/>
    <property type="molecule type" value="Genomic_DNA"/>
</dbReference>
<dbReference type="EMBL" id="AC069159">
    <property type="protein sequence ID" value="AAG50908.1"/>
    <property type="molecule type" value="Genomic_DNA"/>
</dbReference>
<dbReference type="EMBL" id="CP002684">
    <property type="protein sequence ID" value="AEE33379.1"/>
    <property type="molecule type" value="Genomic_DNA"/>
</dbReference>
<dbReference type="EMBL" id="AY062628">
    <property type="protein sequence ID" value="AAL32706.1"/>
    <property type="molecule type" value="mRNA"/>
</dbReference>
<dbReference type="EMBL" id="BT008511">
    <property type="protein sequence ID" value="AAP37870.1"/>
    <property type="molecule type" value="mRNA"/>
</dbReference>
<dbReference type="PIR" id="C96605">
    <property type="entry name" value="C96605"/>
</dbReference>
<dbReference type="RefSeq" id="NP_176030.1">
    <molecule id="O04151-1"/>
    <property type="nucleotide sequence ID" value="NM_104513.5"/>
</dbReference>
<dbReference type="SMR" id="O04151"/>
<dbReference type="BioGRID" id="27312">
    <property type="interactions" value="16"/>
</dbReference>
<dbReference type="FunCoup" id="O04151">
    <property type="interactions" value="3386"/>
</dbReference>
<dbReference type="STRING" id="3702.O04151"/>
<dbReference type="GlyCosmos" id="O04151">
    <property type="glycosylation" value="3 sites, No reported glycans"/>
</dbReference>
<dbReference type="GlyGen" id="O04151">
    <property type="glycosylation" value="3 sites"/>
</dbReference>
<dbReference type="iPTMnet" id="O04151"/>
<dbReference type="PaxDb" id="3702-AT1G56340.1"/>
<dbReference type="ProteomicsDB" id="222776">
    <molecule id="O04151-1"/>
</dbReference>
<dbReference type="EnsemblPlants" id="AT1G56340.1">
    <molecule id="O04151-1"/>
    <property type="protein sequence ID" value="AT1G56340.1"/>
    <property type="gene ID" value="AT1G56340"/>
</dbReference>
<dbReference type="GeneID" id="842087"/>
<dbReference type="Gramene" id="AT1G56340.1">
    <molecule id="O04151-1"/>
    <property type="protein sequence ID" value="AT1G56340.1"/>
    <property type="gene ID" value="AT1G56340"/>
</dbReference>
<dbReference type="KEGG" id="ath:AT1G56340"/>
<dbReference type="Araport" id="AT1G56340"/>
<dbReference type="TAIR" id="AT1G56340">
    <property type="gene designation" value="CRT1A"/>
</dbReference>
<dbReference type="eggNOG" id="KOG0674">
    <property type="taxonomic scope" value="Eukaryota"/>
</dbReference>
<dbReference type="HOGENOM" id="CLU_018224_0_2_1"/>
<dbReference type="InParanoid" id="O04151"/>
<dbReference type="OMA" id="WHAAICA"/>
<dbReference type="PhylomeDB" id="O04151"/>
<dbReference type="CD-CODE" id="4299E36E">
    <property type="entry name" value="Nucleolus"/>
</dbReference>
<dbReference type="PRO" id="PR:O04151"/>
<dbReference type="Proteomes" id="UP000006548">
    <property type="component" value="Chromosome 1"/>
</dbReference>
<dbReference type="ExpressionAtlas" id="O04151">
    <property type="expression patterns" value="baseline and differential"/>
</dbReference>
<dbReference type="GO" id="GO:0005783">
    <property type="term" value="C:endoplasmic reticulum"/>
    <property type="evidence" value="ECO:0007005"/>
    <property type="project" value="TAIR"/>
</dbReference>
<dbReference type="GO" id="GO:0005788">
    <property type="term" value="C:endoplasmic reticulum lumen"/>
    <property type="evidence" value="ECO:0007669"/>
    <property type="project" value="UniProtKB-SubCell"/>
</dbReference>
<dbReference type="GO" id="GO:0005739">
    <property type="term" value="C:mitochondrion"/>
    <property type="evidence" value="ECO:0007005"/>
    <property type="project" value="TAIR"/>
</dbReference>
<dbReference type="GO" id="GO:0005634">
    <property type="term" value="C:nucleus"/>
    <property type="evidence" value="ECO:0007005"/>
    <property type="project" value="TAIR"/>
</dbReference>
<dbReference type="GO" id="GO:0000325">
    <property type="term" value="C:plant-type vacuole"/>
    <property type="evidence" value="ECO:0007005"/>
    <property type="project" value="TAIR"/>
</dbReference>
<dbReference type="GO" id="GO:0009506">
    <property type="term" value="C:plasmodesma"/>
    <property type="evidence" value="ECO:0007005"/>
    <property type="project" value="TAIR"/>
</dbReference>
<dbReference type="GO" id="GO:0099503">
    <property type="term" value="C:secretory vesicle"/>
    <property type="evidence" value="ECO:0007005"/>
    <property type="project" value="TAIR"/>
</dbReference>
<dbReference type="GO" id="GO:0005509">
    <property type="term" value="F:calcium ion binding"/>
    <property type="evidence" value="ECO:0007669"/>
    <property type="project" value="InterPro"/>
</dbReference>
<dbReference type="GO" id="GO:0030246">
    <property type="term" value="F:carbohydrate binding"/>
    <property type="evidence" value="ECO:0007669"/>
    <property type="project" value="UniProtKB-KW"/>
</dbReference>
<dbReference type="GO" id="GO:0051082">
    <property type="term" value="F:unfolded protein binding"/>
    <property type="evidence" value="ECO:0007669"/>
    <property type="project" value="InterPro"/>
</dbReference>
<dbReference type="GO" id="GO:0006457">
    <property type="term" value="P:protein folding"/>
    <property type="evidence" value="ECO:0007669"/>
    <property type="project" value="InterPro"/>
</dbReference>
<dbReference type="GO" id="GO:0034976">
    <property type="term" value="P:response to endoplasmic reticulum stress"/>
    <property type="evidence" value="ECO:0000353"/>
    <property type="project" value="TAIR"/>
</dbReference>
<dbReference type="FunFam" id="2.10.250.10:FF:000002">
    <property type="entry name" value="Calreticulin"/>
    <property type="match status" value="1"/>
</dbReference>
<dbReference type="FunFam" id="2.60.120.200:FF:000018">
    <property type="entry name" value="Calreticulin 1b"/>
    <property type="match status" value="1"/>
</dbReference>
<dbReference type="Gene3D" id="2.60.120.200">
    <property type="match status" value="1"/>
</dbReference>
<dbReference type="Gene3D" id="2.10.250.10">
    <property type="entry name" value="Calreticulin/calnexin, P domain"/>
    <property type="match status" value="1"/>
</dbReference>
<dbReference type="InterPro" id="IPR001580">
    <property type="entry name" value="Calret/calnex"/>
</dbReference>
<dbReference type="InterPro" id="IPR018124">
    <property type="entry name" value="Calret/calnex_CS"/>
</dbReference>
<dbReference type="InterPro" id="IPR009169">
    <property type="entry name" value="Calreticulin"/>
</dbReference>
<dbReference type="InterPro" id="IPR009033">
    <property type="entry name" value="Calreticulin/calnexin_P_dom_sf"/>
</dbReference>
<dbReference type="InterPro" id="IPR013320">
    <property type="entry name" value="ConA-like_dom_sf"/>
</dbReference>
<dbReference type="PANTHER" id="PTHR11073:SF2">
    <property type="entry name" value="CALRETICULIN"/>
    <property type="match status" value="1"/>
</dbReference>
<dbReference type="PANTHER" id="PTHR11073">
    <property type="entry name" value="CALRETICULIN AND CALNEXIN"/>
    <property type="match status" value="1"/>
</dbReference>
<dbReference type="Pfam" id="PF00262">
    <property type="entry name" value="Calreticulin"/>
    <property type="match status" value="2"/>
</dbReference>
<dbReference type="PIRSF" id="PIRSF002356">
    <property type="entry name" value="Calreticulin"/>
    <property type="match status" value="1"/>
</dbReference>
<dbReference type="PRINTS" id="PR00626">
    <property type="entry name" value="CALRETICULIN"/>
</dbReference>
<dbReference type="SUPFAM" id="SSF49899">
    <property type="entry name" value="Concanavalin A-like lectins/glucanases"/>
    <property type="match status" value="1"/>
</dbReference>
<dbReference type="SUPFAM" id="SSF63887">
    <property type="entry name" value="P-domain of calnexin/calreticulin"/>
    <property type="match status" value="1"/>
</dbReference>
<dbReference type="PROSITE" id="PS00803">
    <property type="entry name" value="CALRETICULIN_1"/>
    <property type="match status" value="1"/>
</dbReference>
<dbReference type="PROSITE" id="PS00804">
    <property type="entry name" value="CALRETICULIN_2"/>
    <property type="match status" value="1"/>
</dbReference>
<dbReference type="PROSITE" id="PS00805">
    <property type="entry name" value="CALRETICULIN_REPEAT"/>
    <property type="match status" value="2"/>
</dbReference>
<dbReference type="PROSITE" id="PS00014">
    <property type="entry name" value="ER_TARGET"/>
    <property type="match status" value="1"/>
</dbReference>
<reference key="1">
    <citation type="journal article" date="1997" name="Plant Physiol.">
        <title>Abundant accumulation of the calcium-binding molecular chaperone calreticulin in specific floral tissues of Arabidopsis thaliana.</title>
        <authorList>
            <person name="Nelson D.E."/>
            <person name="Glaunsinger B."/>
            <person name="Bohnert H.J."/>
        </authorList>
    </citation>
    <scope>NUCLEOTIDE SEQUENCE [MRNA]</scope>
</reference>
<reference key="2">
    <citation type="journal article" date="2000" name="Nature">
        <title>Sequence and analysis of chromosome 1 of the plant Arabidopsis thaliana.</title>
        <authorList>
            <person name="Theologis A."/>
            <person name="Ecker J.R."/>
            <person name="Palm C.J."/>
            <person name="Federspiel N.A."/>
            <person name="Kaul S."/>
            <person name="White O."/>
            <person name="Alonso J."/>
            <person name="Altafi H."/>
            <person name="Araujo R."/>
            <person name="Bowman C.L."/>
            <person name="Brooks S.Y."/>
            <person name="Buehler E."/>
            <person name="Chan A."/>
            <person name="Chao Q."/>
            <person name="Chen H."/>
            <person name="Cheuk R.F."/>
            <person name="Chin C.W."/>
            <person name="Chung M.K."/>
            <person name="Conn L."/>
            <person name="Conway A.B."/>
            <person name="Conway A.R."/>
            <person name="Creasy T.H."/>
            <person name="Dewar K."/>
            <person name="Dunn P."/>
            <person name="Etgu P."/>
            <person name="Feldblyum T.V."/>
            <person name="Feng J.-D."/>
            <person name="Fong B."/>
            <person name="Fujii C.Y."/>
            <person name="Gill J.E."/>
            <person name="Goldsmith A.D."/>
            <person name="Haas B."/>
            <person name="Hansen N.F."/>
            <person name="Hughes B."/>
            <person name="Huizar L."/>
            <person name="Hunter J.L."/>
            <person name="Jenkins J."/>
            <person name="Johnson-Hopson C."/>
            <person name="Khan S."/>
            <person name="Khaykin E."/>
            <person name="Kim C.J."/>
            <person name="Koo H.L."/>
            <person name="Kremenetskaia I."/>
            <person name="Kurtz D.B."/>
            <person name="Kwan A."/>
            <person name="Lam B."/>
            <person name="Langin-Hooper S."/>
            <person name="Lee A."/>
            <person name="Lee J.M."/>
            <person name="Lenz C.A."/>
            <person name="Li J.H."/>
            <person name="Li Y.-P."/>
            <person name="Lin X."/>
            <person name="Liu S.X."/>
            <person name="Liu Z.A."/>
            <person name="Luros J.S."/>
            <person name="Maiti R."/>
            <person name="Marziali A."/>
            <person name="Militscher J."/>
            <person name="Miranda M."/>
            <person name="Nguyen M."/>
            <person name="Nierman W.C."/>
            <person name="Osborne B.I."/>
            <person name="Pai G."/>
            <person name="Peterson J."/>
            <person name="Pham P.K."/>
            <person name="Rizzo M."/>
            <person name="Rooney T."/>
            <person name="Rowley D."/>
            <person name="Sakano H."/>
            <person name="Salzberg S.L."/>
            <person name="Schwartz J.R."/>
            <person name="Shinn P."/>
            <person name="Southwick A.M."/>
            <person name="Sun H."/>
            <person name="Tallon L.J."/>
            <person name="Tambunga G."/>
            <person name="Toriumi M.J."/>
            <person name="Town C.D."/>
            <person name="Utterback T."/>
            <person name="Van Aken S."/>
            <person name="Vaysberg M."/>
            <person name="Vysotskaia V.S."/>
            <person name="Walker M."/>
            <person name="Wu D."/>
            <person name="Yu G."/>
            <person name="Fraser C.M."/>
            <person name="Venter J.C."/>
            <person name="Davis R.W."/>
        </authorList>
    </citation>
    <scope>NUCLEOTIDE SEQUENCE [LARGE SCALE GENOMIC DNA]</scope>
    <source>
        <strain>cv. Columbia</strain>
    </source>
</reference>
<reference key="3">
    <citation type="journal article" date="2017" name="Plant J.">
        <title>Araport11: a complete reannotation of the Arabidopsis thaliana reference genome.</title>
        <authorList>
            <person name="Cheng C.Y."/>
            <person name="Krishnakumar V."/>
            <person name="Chan A.P."/>
            <person name="Thibaud-Nissen F."/>
            <person name="Schobel S."/>
            <person name="Town C.D."/>
        </authorList>
    </citation>
    <scope>GENOME REANNOTATION</scope>
    <source>
        <strain>cv. Columbia</strain>
    </source>
</reference>
<reference key="4">
    <citation type="journal article" date="2003" name="Science">
        <title>Empirical analysis of transcriptional activity in the Arabidopsis genome.</title>
        <authorList>
            <person name="Yamada K."/>
            <person name="Lim J."/>
            <person name="Dale J.M."/>
            <person name="Chen H."/>
            <person name="Shinn P."/>
            <person name="Palm C.J."/>
            <person name="Southwick A.M."/>
            <person name="Wu H.C."/>
            <person name="Kim C.J."/>
            <person name="Nguyen M."/>
            <person name="Pham P.K."/>
            <person name="Cheuk R.F."/>
            <person name="Karlin-Newmann G."/>
            <person name="Liu S.X."/>
            <person name="Lam B."/>
            <person name="Sakano H."/>
            <person name="Wu T."/>
            <person name="Yu G."/>
            <person name="Miranda M."/>
            <person name="Quach H.L."/>
            <person name="Tripp M."/>
            <person name="Chang C.H."/>
            <person name="Lee J.M."/>
            <person name="Toriumi M.J."/>
            <person name="Chan M.M."/>
            <person name="Tang C.C."/>
            <person name="Onodera C.S."/>
            <person name="Deng J.M."/>
            <person name="Akiyama K."/>
            <person name="Ansari Y."/>
            <person name="Arakawa T."/>
            <person name="Banh J."/>
            <person name="Banno F."/>
            <person name="Bowser L."/>
            <person name="Brooks S.Y."/>
            <person name="Carninci P."/>
            <person name="Chao Q."/>
            <person name="Choy N."/>
            <person name="Enju A."/>
            <person name="Goldsmith A.D."/>
            <person name="Gurjal M."/>
            <person name="Hansen N.F."/>
            <person name="Hayashizaki Y."/>
            <person name="Johnson-Hopson C."/>
            <person name="Hsuan V.W."/>
            <person name="Iida K."/>
            <person name="Karnes M."/>
            <person name="Khan S."/>
            <person name="Koesema E."/>
            <person name="Ishida J."/>
            <person name="Jiang P.X."/>
            <person name="Jones T."/>
            <person name="Kawai J."/>
            <person name="Kamiya A."/>
            <person name="Meyers C."/>
            <person name="Nakajima M."/>
            <person name="Narusaka M."/>
            <person name="Seki M."/>
            <person name="Sakurai T."/>
            <person name="Satou M."/>
            <person name="Tamse R."/>
            <person name="Vaysberg M."/>
            <person name="Wallender E.K."/>
            <person name="Wong C."/>
            <person name="Yamamura Y."/>
            <person name="Yuan S."/>
            <person name="Shinozaki K."/>
            <person name="Davis R.W."/>
            <person name="Theologis A."/>
            <person name="Ecker J.R."/>
        </authorList>
    </citation>
    <scope>NUCLEOTIDE SEQUENCE [LARGE SCALE MRNA]</scope>
    <source>
        <strain>cv. Columbia</strain>
    </source>
</reference>
<reference key="5">
    <citation type="journal article" date="2006" name="Proteomics">
        <title>The early responses of Arabidopsis thaliana cells to cadmium exposure explored by protein and metabolite profiling analyses.</title>
        <authorList>
            <person name="Sarry J.-E."/>
            <person name="Kuhn L."/>
            <person name="Ducruix C."/>
            <person name="Lafaye A."/>
            <person name="Junot C."/>
            <person name="Hugouvieux V."/>
            <person name="Jourdain A."/>
            <person name="Bastien O."/>
            <person name="Fievet J.B."/>
            <person name="Vailhen D."/>
            <person name="Amekraz B."/>
            <person name="Moulin C."/>
            <person name="Ezan E."/>
            <person name="Garin J."/>
            <person name="Bourguignon J."/>
        </authorList>
    </citation>
    <scope>INDUCTION BY CADMIUM</scope>
    <source>
        <strain>cv. Columbia</strain>
    </source>
</reference>
<reference key="6">
    <citation type="journal article" date="2009" name="J. Proteomics">
        <title>Phosphoproteomic analysis of nuclei-enriched fractions from Arabidopsis thaliana.</title>
        <authorList>
            <person name="Jones A.M.E."/>
            <person name="MacLean D."/>
            <person name="Studholme D.J."/>
            <person name="Serna-Sanz A."/>
            <person name="Andreasson E."/>
            <person name="Rathjen J.P."/>
            <person name="Peck S.C."/>
        </authorList>
    </citation>
    <scope>PHOSPHORYLATION [LARGE SCALE ANALYSIS] AT SER-381</scope>
    <scope>IDENTIFICATION BY MASS SPECTROMETRY [LARGE SCALE ANALYSIS]</scope>
    <source>
        <strain>cv. Columbia</strain>
    </source>
</reference>
<reference key="7">
    <citation type="journal article" date="2009" name="Plant Physiol.">
        <title>Large-scale Arabidopsis phosphoproteome profiling reveals novel chloroplast kinase substrates and phosphorylation networks.</title>
        <authorList>
            <person name="Reiland S."/>
            <person name="Messerli G."/>
            <person name="Baerenfaller K."/>
            <person name="Gerrits B."/>
            <person name="Endler A."/>
            <person name="Grossmann J."/>
            <person name="Gruissem W."/>
            <person name="Baginsky S."/>
        </authorList>
    </citation>
    <scope>PHOSPHORYLATION [LARGE SCALE ANALYSIS] AT SER-381</scope>
    <scope>IDENTIFICATION BY MASS SPECTROMETRY [LARGE SCALE ANALYSIS]</scope>
</reference>
<organism>
    <name type="scientific">Arabidopsis thaliana</name>
    <name type="common">Mouse-ear cress</name>
    <dbReference type="NCBI Taxonomy" id="3702"/>
    <lineage>
        <taxon>Eukaryota</taxon>
        <taxon>Viridiplantae</taxon>
        <taxon>Streptophyta</taxon>
        <taxon>Embryophyta</taxon>
        <taxon>Tracheophyta</taxon>
        <taxon>Spermatophyta</taxon>
        <taxon>Magnoliopsida</taxon>
        <taxon>eudicotyledons</taxon>
        <taxon>Gunneridae</taxon>
        <taxon>Pentapetalae</taxon>
        <taxon>rosids</taxon>
        <taxon>malvids</taxon>
        <taxon>Brassicales</taxon>
        <taxon>Brassicaceae</taxon>
        <taxon>Camelineae</taxon>
        <taxon>Arabidopsis</taxon>
    </lineage>
</organism>